<comment type="function">
    <text evidence="1 4">Required for pre-mRNA splicing as component of the spliceosome (By similarity). Binds double-stranded RNA. Inhibits EIF2AK2 kinase activity.</text>
</comment>
<comment type="subunit">
    <text evidence="1 4">Component of the pre-catalytic and post-catalytic spliceosome complexes (By similarity). Interacts with EIF2AK2.</text>
</comment>
<comment type="subcellular location">
    <subcellularLocation>
        <location evidence="1">Nucleus</location>
    </subcellularLocation>
    <subcellularLocation>
        <location evidence="4">Nucleus</location>
        <location evidence="4">Nucleolus</location>
    </subcellularLocation>
</comment>
<comment type="tissue specificity">
    <text evidence="4">Broadly expressed, with highest levels in liver, kidney, brain and heart.</text>
</comment>
<comment type="induction">
    <text evidence="4">By IL11.</text>
</comment>
<comment type="similarity">
    <text evidence="5">Belongs to the PRKRIP1 family.</text>
</comment>
<comment type="sequence caution" evidence="5">
    <conflict type="erroneous initiation">
        <sequence resource="EMBL-CDS" id="BAB31212"/>
    </conflict>
</comment>
<keyword id="KW-0175">Coiled coil</keyword>
<keyword id="KW-0507">mRNA processing</keyword>
<keyword id="KW-0508">mRNA splicing</keyword>
<keyword id="KW-0539">Nucleus</keyword>
<keyword id="KW-1185">Reference proteome</keyword>
<keyword id="KW-0747">Spliceosome</keyword>
<gene>
    <name type="primary">Prkrip1</name>
</gene>
<proteinExistence type="evidence at protein level"/>
<organism>
    <name type="scientific">Mus musculus</name>
    <name type="common">Mouse</name>
    <dbReference type="NCBI Taxonomy" id="10090"/>
    <lineage>
        <taxon>Eukaryota</taxon>
        <taxon>Metazoa</taxon>
        <taxon>Chordata</taxon>
        <taxon>Craniata</taxon>
        <taxon>Vertebrata</taxon>
        <taxon>Euteleostomi</taxon>
        <taxon>Mammalia</taxon>
        <taxon>Eutheria</taxon>
        <taxon>Euarchontoglires</taxon>
        <taxon>Glires</taxon>
        <taxon>Rodentia</taxon>
        <taxon>Myomorpha</taxon>
        <taxon>Muroidea</taxon>
        <taxon>Muridae</taxon>
        <taxon>Murinae</taxon>
        <taxon>Mus</taxon>
        <taxon>Mus</taxon>
    </lineage>
</organism>
<evidence type="ECO:0000250" key="1">
    <source>
        <dbReference type="UniProtKB" id="Q9H875"/>
    </source>
</evidence>
<evidence type="ECO:0000255" key="2"/>
<evidence type="ECO:0000256" key="3">
    <source>
        <dbReference type="SAM" id="MobiDB-lite"/>
    </source>
</evidence>
<evidence type="ECO:0000269" key="4">
    <source>
    </source>
</evidence>
<evidence type="ECO:0000305" key="5"/>
<feature type="chain" id="PRO_0000324788" description="PRKR-interacting protein 1">
    <location>
        <begin position="1"/>
        <end position="186"/>
    </location>
</feature>
<feature type="region of interest" description="Interaction with EIF2AK2" evidence="4">
    <location>
        <begin position="1"/>
        <end position="50"/>
    </location>
</feature>
<feature type="region of interest" description="Required for RNA-binding">
    <location>
        <begin position="51"/>
        <end position="143"/>
    </location>
</feature>
<feature type="region of interest" description="Disordered" evidence="3">
    <location>
        <begin position="116"/>
        <end position="186"/>
    </location>
</feature>
<feature type="region of interest" description="Required for nuclear localization">
    <location>
        <begin position="126"/>
        <end position="138"/>
    </location>
</feature>
<feature type="coiled-coil region" evidence="2">
    <location>
        <begin position="91"/>
        <end position="178"/>
    </location>
</feature>
<feature type="compositionally biased region" description="Basic and acidic residues" evidence="3">
    <location>
        <begin position="116"/>
        <end position="125"/>
    </location>
</feature>
<feature type="compositionally biased region" description="Basic residues" evidence="3">
    <location>
        <begin position="126"/>
        <end position="143"/>
    </location>
</feature>
<feature type="compositionally biased region" description="Basic and acidic residues" evidence="3">
    <location>
        <begin position="144"/>
        <end position="155"/>
    </location>
</feature>
<feature type="compositionally biased region" description="Acidic residues" evidence="3">
    <location>
        <begin position="168"/>
        <end position="179"/>
    </location>
</feature>
<feature type="sequence conflict" description="In Ref. 2; BAB31212." evidence="5" ref="2">
    <original>M</original>
    <variation>L</variation>
    <location>
        <position position="1"/>
    </location>
</feature>
<feature type="sequence conflict" description="In Ref. 2; BAB31212." evidence="5" ref="2">
    <original>A</original>
    <variation>V</variation>
    <location>
        <position position="6"/>
    </location>
</feature>
<feature type="sequence conflict" description="In Ref. 2; BAB26879." evidence="5" ref="2">
    <original>V</original>
    <variation>L</variation>
    <location>
        <position position="182"/>
    </location>
</feature>
<name>PKRI1_MOUSE</name>
<sequence length="186" mass="21492">MASPAAASVRPPRPKKEPQTLVIPKNAAEEQKLKLERLMKNPDKAVPIPEKMNEWAPRAPPEFVRDVMGSSAGAGSGEFHVYRHLRRREYQRQDYMDAMAEKQKLDAEFQKRLEKNKIAAEEQTAKRRKKRQKLKEKKLLAKKMKLEQKKQKEEPSQCQEQHASSSDEASETEEEEEEPSVVIMGR</sequence>
<accession>Q9CWV6</accession>
<accession>Q8BL85</accession>
<accession>Q9CXA5</accession>
<accession>Q9CY32</accession>
<dbReference type="EMBL" id="AK010961">
    <property type="protein sequence ID" value="BAB27293.1"/>
    <property type="molecule type" value="mRNA"/>
</dbReference>
<dbReference type="EMBL" id="AK088862">
    <property type="protein sequence ID" value="BAC40620.1"/>
    <property type="molecule type" value="mRNA"/>
</dbReference>
<dbReference type="EMBL" id="AK018438">
    <property type="protein sequence ID" value="BAB31212.1"/>
    <property type="status" value="ALT_INIT"/>
    <property type="molecule type" value="mRNA"/>
</dbReference>
<dbReference type="EMBL" id="AK046035">
    <property type="protein sequence ID" value="BAC32579.1"/>
    <property type="molecule type" value="mRNA"/>
</dbReference>
<dbReference type="EMBL" id="AK010359">
    <property type="protein sequence ID" value="BAB26879.1"/>
    <property type="molecule type" value="mRNA"/>
</dbReference>
<dbReference type="EMBL" id="BC027503">
    <property type="protein sequence ID" value="AAH27503.1"/>
    <property type="molecule type" value="mRNA"/>
</dbReference>
<dbReference type="CCDS" id="CCDS19754.1"/>
<dbReference type="RefSeq" id="NP_080050.1">
    <property type="nucleotide sequence ID" value="NM_025774.3"/>
</dbReference>
<dbReference type="SMR" id="Q9CWV6"/>
<dbReference type="FunCoup" id="Q9CWV6">
    <property type="interactions" value="2369"/>
</dbReference>
<dbReference type="STRING" id="10090.ENSMUSP00000120659"/>
<dbReference type="PhosphoSitePlus" id="Q9CWV6"/>
<dbReference type="PaxDb" id="10090-ENSMUSP00000120659"/>
<dbReference type="PeptideAtlas" id="Q9CWV6"/>
<dbReference type="ProteomicsDB" id="289442"/>
<dbReference type="Pumba" id="Q9CWV6"/>
<dbReference type="Antibodypedia" id="35198">
    <property type="antibodies" value="67 antibodies from 18 providers"/>
</dbReference>
<dbReference type="Ensembl" id="ENSMUST00000151786.8">
    <property type="protein sequence ID" value="ENSMUSP00000120659.2"/>
    <property type="gene ID" value="ENSMUSG00000039737.12"/>
</dbReference>
<dbReference type="GeneID" id="66801"/>
<dbReference type="KEGG" id="mmu:66801"/>
<dbReference type="UCSC" id="uc009aaf.1">
    <property type="organism name" value="mouse"/>
</dbReference>
<dbReference type="AGR" id="MGI:1914051"/>
<dbReference type="CTD" id="79706"/>
<dbReference type="MGI" id="MGI:1914051">
    <property type="gene designation" value="Prkrip1"/>
</dbReference>
<dbReference type="VEuPathDB" id="HostDB:ENSMUSG00000039737"/>
<dbReference type="eggNOG" id="KOG4055">
    <property type="taxonomic scope" value="Eukaryota"/>
</dbReference>
<dbReference type="GeneTree" id="ENSGT00390000005003"/>
<dbReference type="HOGENOM" id="CLU_079129_2_0_1"/>
<dbReference type="InParanoid" id="Q9CWV6"/>
<dbReference type="OMA" id="ETPSFIM"/>
<dbReference type="OrthoDB" id="10067079at2759"/>
<dbReference type="PhylomeDB" id="Q9CWV6"/>
<dbReference type="TreeFam" id="TF314382"/>
<dbReference type="Reactome" id="R-MMU-72163">
    <property type="pathway name" value="mRNA Splicing - Major Pathway"/>
</dbReference>
<dbReference type="BioGRID-ORCS" id="66801">
    <property type="hits" value="18 hits in 76 CRISPR screens"/>
</dbReference>
<dbReference type="ChiTaRS" id="Prkrip1">
    <property type="organism name" value="mouse"/>
</dbReference>
<dbReference type="PRO" id="PR:Q9CWV6"/>
<dbReference type="Proteomes" id="UP000000589">
    <property type="component" value="Chromosome 5"/>
</dbReference>
<dbReference type="RNAct" id="Q9CWV6">
    <property type="molecule type" value="protein"/>
</dbReference>
<dbReference type="Bgee" id="ENSMUSG00000039737">
    <property type="expression patterns" value="Expressed in animal zygote and 246 other cell types or tissues"/>
</dbReference>
<dbReference type="ExpressionAtlas" id="Q9CWV6">
    <property type="expression patterns" value="baseline and differential"/>
</dbReference>
<dbReference type="GO" id="GO:0005730">
    <property type="term" value="C:nucleolus"/>
    <property type="evidence" value="ECO:0000314"/>
    <property type="project" value="MGI"/>
</dbReference>
<dbReference type="GO" id="GO:0005681">
    <property type="term" value="C:spliceosomal complex"/>
    <property type="evidence" value="ECO:0007669"/>
    <property type="project" value="UniProtKB-KW"/>
</dbReference>
<dbReference type="GO" id="GO:0003725">
    <property type="term" value="F:double-stranded RNA binding"/>
    <property type="evidence" value="ECO:0000314"/>
    <property type="project" value="MGI"/>
</dbReference>
<dbReference type="GO" id="GO:0019901">
    <property type="term" value="F:protein kinase binding"/>
    <property type="evidence" value="ECO:0000314"/>
    <property type="project" value="MGI"/>
</dbReference>
<dbReference type="GO" id="GO:0004860">
    <property type="term" value="F:protein kinase inhibitor activity"/>
    <property type="evidence" value="ECO:0000314"/>
    <property type="project" value="MGI"/>
</dbReference>
<dbReference type="GO" id="GO:0006397">
    <property type="term" value="P:mRNA processing"/>
    <property type="evidence" value="ECO:0007669"/>
    <property type="project" value="UniProtKB-KW"/>
</dbReference>
<dbReference type="GO" id="GO:0003014">
    <property type="term" value="P:renal system process"/>
    <property type="evidence" value="ECO:0007669"/>
    <property type="project" value="Ensembl"/>
</dbReference>
<dbReference type="GO" id="GO:0008380">
    <property type="term" value="P:RNA splicing"/>
    <property type="evidence" value="ECO:0007669"/>
    <property type="project" value="UniProtKB-KW"/>
</dbReference>
<dbReference type="InterPro" id="IPR009548">
    <property type="entry name" value="Prkrip1"/>
</dbReference>
<dbReference type="PANTHER" id="PTHR13507">
    <property type="entry name" value="PRKR-INTERACTING PROTEIN 1"/>
    <property type="match status" value="1"/>
</dbReference>
<dbReference type="PANTHER" id="PTHR13507:SF0">
    <property type="entry name" value="PRKR-INTERACTING PROTEIN 1"/>
    <property type="match status" value="1"/>
</dbReference>
<dbReference type="Pfam" id="PF06658">
    <property type="entry name" value="DUF1168"/>
    <property type="match status" value="1"/>
</dbReference>
<protein>
    <recommendedName>
        <fullName>PRKR-interacting protein 1</fullName>
    </recommendedName>
    <alternativeName>
        <fullName>Protein C114</fullName>
    </alternativeName>
</protein>
<reference key="1">
    <citation type="journal article" date="2003" name="J. Biol. Chem.">
        <title>C114 is a novel IL-11-inducible nuclear double-stranded RNA-binding protein that inhibits protein kinase R.</title>
        <authorList>
            <person name="Yin Z."/>
            <person name="Haynie J."/>
            <person name="Williams B.R.G."/>
            <person name="Yang Y.-C."/>
        </authorList>
    </citation>
    <scope>NUCLEOTIDE SEQUENCE [MRNA]</scope>
    <scope>FUNCTION</scope>
    <scope>INDUCTION BY IL11</scope>
    <scope>TISSUE SPECIFICITY</scope>
    <scope>SUBCELLULAR LOCATION</scope>
    <scope>RNA-BINDING</scope>
    <scope>INTERACTION WITH EIF2AK2</scope>
</reference>
<reference key="2">
    <citation type="journal article" date="2005" name="Science">
        <title>The transcriptional landscape of the mammalian genome.</title>
        <authorList>
            <person name="Carninci P."/>
            <person name="Kasukawa T."/>
            <person name="Katayama S."/>
            <person name="Gough J."/>
            <person name="Frith M.C."/>
            <person name="Maeda N."/>
            <person name="Oyama R."/>
            <person name="Ravasi T."/>
            <person name="Lenhard B."/>
            <person name="Wells C."/>
            <person name="Kodzius R."/>
            <person name="Shimokawa K."/>
            <person name="Bajic V.B."/>
            <person name="Brenner S.E."/>
            <person name="Batalov S."/>
            <person name="Forrest A.R."/>
            <person name="Zavolan M."/>
            <person name="Davis M.J."/>
            <person name="Wilming L.G."/>
            <person name="Aidinis V."/>
            <person name="Allen J.E."/>
            <person name="Ambesi-Impiombato A."/>
            <person name="Apweiler R."/>
            <person name="Aturaliya R.N."/>
            <person name="Bailey T.L."/>
            <person name="Bansal M."/>
            <person name="Baxter L."/>
            <person name="Beisel K.W."/>
            <person name="Bersano T."/>
            <person name="Bono H."/>
            <person name="Chalk A.M."/>
            <person name="Chiu K.P."/>
            <person name="Choudhary V."/>
            <person name="Christoffels A."/>
            <person name="Clutterbuck D.R."/>
            <person name="Crowe M.L."/>
            <person name="Dalla E."/>
            <person name="Dalrymple B.P."/>
            <person name="de Bono B."/>
            <person name="Della Gatta G."/>
            <person name="di Bernardo D."/>
            <person name="Down T."/>
            <person name="Engstrom P."/>
            <person name="Fagiolini M."/>
            <person name="Faulkner G."/>
            <person name="Fletcher C.F."/>
            <person name="Fukushima T."/>
            <person name="Furuno M."/>
            <person name="Futaki S."/>
            <person name="Gariboldi M."/>
            <person name="Georgii-Hemming P."/>
            <person name="Gingeras T.R."/>
            <person name="Gojobori T."/>
            <person name="Green R.E."/>
            <person name="Gustincich S."/>
            <person name="Harbers M."/>
            <person name="Hayashi Y."/>
            <person name="Hensch T.K."/>
            <person name="Hirokawa N."/>
            <person name="Hill D."/>
            <person name="Huminiecki L."/>
            <person name="Iacono M."/>
            <person name="Ikeo K."/>
            <person name="Iwama A."/>
            <person name="Ishikawa T."/>
            <person name="Jakt M."/>
            <person name="Kanapin A."/>
            <person name="Katoh M."/>
            <person name="Kawasawa Y."/>
            <person name="Kelso J."/>
            <person name="Kitamura H."/>
            <person name="Kitano H."/>
            <person name="Kollias G."/>
            <person name="Krishnan S.P."/>
            <person name="Kruger A."/>
            <person name="Kummerfeld S.K."/>
            <person name="Kurochkin I.V."/>
            <person name="Lareau L.F."/>
            <person name="Lazarevic D."/>
            <person name="Lipovich L."/>
            <person name="Liu J."/>
            <person name="Liuni S."/>
            <person name="McWilliam S."/>
            <person name="Madan Babu M."/>
            <person name="Madera M."/>
            <person name="Marchionni L."/>
            <person name="Matsuda H."/>
            <person name="Matsuzawa S."/>
            <person name="Miki H."/>
            <person name="Mignone F."/>
            <person name="Miyake S."/>
            <person name="Morris K."/>
            <person name="Mottagui-Tabar S."/>
            <person name="Mulder N."/>
            <person name="Nakano N."/>
            <person name="Nakauchi H."/>
            <person name="Ng P."/>
            <person name="Nilsson R."/>
            <person name="Nishiguchi S."/>
            <person name="Nishikawa S."/>
            <person name="Nori F."/>
            <person name="Ohara O."/>
            <person name="Okazaki Y."/>
            <person name="Orlando V."/>
            <person name="Pang K.C."/>
            <person name="Pavan W.J."/>
            <person name="Pavesi G."/>
            <person name="Pesole G."/>
            <person name="Petrovsky N."/>
            <person name="Piazza S."/>
            <person name="Reed J."/>
            <person name="Reid J.F."/>
            <person name="Ring B.Z."/>
            <person name="Ringwald M."/>
            <person name="Rost B."/>
            <person name="Ruan Y."/>
            <person name="Salzberg S.L."/>
            <person name="Sandelin A."/>
            <person name="Schneider C."/>
            <person name="Schoenbach C."/>
            <person name="Sekiguchi K."/>
            <person name="Semple C.A."/>
            <person name="Seno S."/>
            <person name="Sessa L."/>
            <person name="Sheng Y."/>
            <person name="Shibata Y."/>
            <person name="Shimada H."/>
            <person name="Shimada K."/>
            <person name="Silva D."/>
            <person name="Sinclair B."/>
            <person name="Sperling S."/>
            <person name="Stupka E."/>
            <person name="Sugiura K."/>
            <person name="Sultana R."/>
            <person name="Takenaka Y."/>
            <person name="Taki K."/>
            <person name="Tammoja K."/>
            <person name="Tan S.L."/>
            <person name="Tang S."/>
            <person name="Taylor M.S."/>
            <person name="Tegner J."/>
            <person name="Teichmann S.A."/>
            <person name="Ueda H.R."/>
            <person name="van Nimwegen E."/>
            <person name="Verardo R."/>
            <person name="Wei C.L."/>
            <person name="Yagi K."/>
            <person name="Yamanishi H."/>
            <person name="Zabarovsky E."/>
            <person name="Zhu S."/>
            <person name="Zimmer A."/>
            <person name="Hide W."/>
            <person name="Bult C."/>
            <person name="Grimmond S.M."/>
            <person name="Teasdale R.D."/>
            <person name="Liu E.T."/>
            <person name="Brusic V."/>
            <person name="Quackenbush J."/>
            <person name="Wahlestedt C."/>
            <person name="Mattick J.S."/>
            <person name="Hume D.A."/>
            <person name="Kai C."/>
            <person name="Sasaki D."/>
            <person name="Tomaru Y."/>
            <person name="Fukuda S."/>
            <person name="Kanamori-Katayama M."/>
            <person name="Suzuki M."/>
            <person name="Aoki J."/>
            <person name="Arakawa T."/>
            <person name="Iida J."/>
            <person name="Imamura K."/>
            <person name="Itoh M."/>
            <person name="Kato T."/>
            <person name="Kawaji H."/>
            <person name="Kawagashira N."/>
            <person name="Kawashima T."/>
            <person name="Kojima M."/>
            <person name="Kondo S."/>
            <person name="Konno H."/>
            <person name="Nakano K."/>
            <person name="Ninomiya N."/>
            <person name="Nishio T."/>
            <person name="Okada M."/>
            <person name="Plessy C."/>
            <person name="Shibata K."/>
            <person name="Shiraki T."/>
            <person name="Suzuki S."/>
            <person name="Tagami M."/>
            <person name="Waki K."/>
            <person name="Watahiki A."/>
            <person name="Okamura-Oho Y."/>
            <person name="Suzuki H."/>
            <person name="Kawai J."/>
            <person name="Hayashizaki Y."/>
        </authorList>
    </citation>
    <scope>NUCLEOTIDE SEQUENCE [LARGE SCALE MRNA]</scope>
    <source>
        <strain>C57BL/6J</strain>
        <strain>NOD</strain>
        <tissue>Corpora quadrigemina</tissue>
        <tissue>Liver</tissue>
        <tissue>Lung</tissue>
        <tissue>Thymus</tissue>
    </source>
</reference>
<reference key="3">
    <citation type="journal article" date="2004" name="Genome Res.">
        <title>The status, quality, and expansion of the NIH full-length cDNA project: the Mammalian Gene Collection (MGC).</title>
        <authorList>
            <consortium name="The MGC Project Team"/>
        </authorList>
    </citation>
    <scope>NUCLEOTIDE SEQUENCE [LARGE SCALE MRNA]</scope>
    <source>
        <tissue>Mammary gland</tissue>
    </source>
</reference>